<accession>O74761</accession>
<accession>Q9US83</accession>
<comment type="function">
    <text evidence="2">Regulatory subunit of the DNA primase complex and component of the DNA polymerase alpha complex (also known as the alpha DNA polymerase-primase complex - primosome/replisome) which play an essential role in the initiation of DNA synthesis (By similarity). During the S phase of the cell cycle, the DNA polymerase alpha complex (composed of a catalytic subunit pol1, an accessory subunit spb70/pol12 and two primase subunits, the catalytic subunit spp1/pri1 and the regulatory subunit spp2/pri2) is recruited to DNA at the replicative forks (By similarity). The primase subunit of the polymerase alpha complex initiates DNA synthesis by oligomerising short RNA primers on both leading and lagging strands (By similarity).</text>
</comment>
<comment type="cofactor">
    <cofactor evidence="3">
        <name>[4Fe-4S] cluster</name>
        <dbReference type="ChEBI" id="CHEBI:49883"/>
    </cofactor>
    <text evidence="3">Binds 1 [4Fe-4S] cluster.</text>
</comment>
<comment type="subunit">
    <text evidence="3 5 6 7">Heterodimer of a catalytic subunit spp1/pri1 and a regulatory subunit spp2/pri2, also known as the DNA primase complex (By similarity). Component of the alpha DNA polymerase complex (also known as the alpha DNA polymerase-primase complex) consisting of four subunits: the catalytic subunit pol1, the accessory subunit spb70/pol12, and the primase complex subunits spp1/pri1 and spp2/pri2 respectively (PubMed:11027257, PubMed:11160827, PubMed:15314153). Interacts with orc2; preferentially associates with the unphosphorylated orc2 in G1 pre-Start prior to orc2 being phosphorylated by cdc2, the interaction is mediated by spb70 and might enable the association of the whole alpha DNA polymerase complex to orc2/spb70 complex on chromatin (PubMed:15314153).</text>
</comment>
<comment type="interaction">
    <interactant intactId="EBI-849075">
        <id>O74761</id>
    </interactant>
    <interactant intactId="EBI-849063">
        <id>O14215</id>
        <label>spp1</label>
    </interactant>
    <organismsDiffer>false</organismsDiffer>
    <experiments>2</experiments>
</comment>
<comment type="subcellular location">
    <subcellularLocation>
        <location evidence="4">Nucleus</location>
    </subcellularLocation>
    <subcellularLocation>
        <location evidence="7">Chromosome</location>
    </subcellularLocation>
    <text evidence="7">Present on chromatin fraction at 40 min after release from G2 arrest and from G1 to S phase.</text>
</comment>
<comment type="similarity">
    <text evidence="9">Belongs to the eukaryotic-type primase large subunit family.</text>
</comment>
<keyword id="KW-0004">4Fe-4S</keyword>
<keyword id="KW-0158">Chromosome</keyword>
<keyword id="KW-0235">DNA replication</keyword>
<keyword id="KW-0238">DNA-binding</keyword>
<keyword id="KW-0408">Iron</keyword>
<keyword id="KW-0411">Iron-sulfur</keyword>
<keyword id="KW-0479">Metal-binding</keyword>
<keyword id="KW-0539">Nucleus</keyword>
<keyword id="KW-0639">Primosome</keyword>
<keyword id="KW-1185">Reference proteome</keyword>
<sequence length="459" mass="53053">MFRTTKSRVVEKNQNFSSASFESLSYPTRLNFYKKPPVSEISIEEFETWAIDRLVVLGEIESAMLRNKTKNELNGIIKKILDKRLPMSSNMARTVKGNSLDEERRKDHYSHFILRLAFSRSDELRIRFLRAESTLFRFRFVNEETRERQAFIDSLDFQWESVSQEEKDVFYEKLQASSQRNIENESFFKVPFFKVPDLVERRAVFVHKGYAYVPFSEQVSLVVEEFEENLKKALESTAKSLPRLDEDDRLLPILNHLSKGFVAPESSIVAPKSGAITAGQVDSFVSHFPLCAKHLHEVLKRDKHLRHFGRLQYGLFLKDIGLSVDEALVFWRKSFTNVTEDKFNKEYRYNIRHTYGLEGNRKNYKGYNCQQILTGPQLGPGDAHGCPYRTYSVNNLVSALASMGIAPDSAGCREVVEAVKARHYHIACTRVFELTHPNVGSLEESIHHPLQYFQLSLES</sequence>
<organism>
    <name type="scientific">Schizosaccharomyces pombe (strain 972 / ATCC 24843)</name>
    <name type="common">Fission yeast</name>
    <dbReference type="NCBI Taxonomy" id="284812"/>
    <lineage>
        <taxon>Eukaryota</taxon>
        <taxon>Fungi</taxon>
        <taxon>Dikarya</taxon>
        <taxon>Ascomycota</taxon>
        <taxon>Taphrinomycotina</taxon>
        <taxon>Schizosaccharomycetes</taxon>
        <taxon>Schizosaccharomycetales</taxon>
        <taxon>Schizosaccharomycetaceae</taxon>
        <taxon>Schizosaccharomyces</taxon>
    </lineage>
</organism>
<gene>
    <name evidence="8 10" type="primary">spp2</name>
    <name evidence="8" type="synonym">p58</name>
    <name evidence="10" type="synonym">pri2</name>
    <name evidence="10" type="ORF">SPBC17D11.06</name>
</gene>
<evidence type="ECO:0000250" key="1"/>
<evidence type="ECO:0000250" key="2">
    <source>
        <dbReference type="UniProtKB" id="P33610"/>
    </source>
</evidence>
<evidence type="ECO:0000250" key="3">
    <source>
        <dbReference type="UniProtKB" id="P49643"/>
    </source>
</evidence>
<evidence type="ECO:0000269" key="4">
    <source>
    </source>
</evidence>
<evidence type="ECO:0000269" key="5">
    <source>
    </source>
</evidence>
<evidence type="ECO:0000269" key="6">
    <source>
    </source>
</evidence>
<evidence type="ECO:0000269" key="7">
    <source>
    </source>
</evidence>
<evidence type="ECO:0000303" key="8">
    <source>
    </source>
</evidence>
<evidence type="ECO:0000305" key="9"/>
<evidence type="ECO:0000312" key="10">
    <source>
        <dbReference type="PomBase" id="SPBC17D11.06"/>
    </source>
</evidence>
<protein>
    <recommendedName>
        <fullName evidence="9">DNA primase large subunit</fullName>
    </recommendedName>
    <alternativeName>
        <fullName evidence="8">DNA primase 2</fullName>
    </alternativeName>
</protein>
<reference key="1">
    <citation type="journal article" date="2002" name="Nature">
        <title>The genome sequence of Schizosaccharomyces pombe.</title>
        <authorList>
            <person name="Wood V."/>
            <person name="Gwilliam R."/>
            <person name="Rajandream M.A."/>
            <person name="Lyne M.H."/>
            <person name="Lyne R."/>
            <person name="Stewart A."/>
            <person name="Sgouros J.G."/>
            <person name="Peat N."/>
            <person name="Hayles J."/>
            <person name="Baker S.G."/>
            <person name="Basham D."/>
            <person name="Bowman S."/>
            <person name="Brooks K."/>
            <person name="Brown D."/>
            <person name="Brown S."/>
            <person name="Chillingworth T."/>
            <person name="Churcher C.M."/>
            <person name="Collins M."/>
            <person name="Connor R."/>
            <person name="Cronin A."/>
            <person name="Davis P."/>
            <person name="Feltwell T."/>
            <person name="Fraser A."/>
            <person name="Gentles S."/>
            <person name="Goble A."/>
            <person name="Hamlin N."/>
            <person name="Harris D.E."/>
            <person name="Hidalgo J."/>
            <person name="Hodgson G."/>
            <person name="Holroyd S."/>
            <person name="Hornsby T."/>
            <person name="Howarth S."/>
            <person name="Huckle E.J."/>
            <person name="Hunt S."/>
            <person name="Jagels K."/>
            <person name="James K.D."/>
            <person name="Jones L."/>
            <person name="Jones M."/>
            <person name="Leather S."/>
            <person name="McDonald S."/>
            <person name="McLean J."/>
            <person name="Mooney P."/>
            <person name="Moule S."/>
            <person name="Mungall K.L."/>
            <person name="Murphy L.D."/>
            <person name="Niblett D."/>
            <person name="Odell C."/>
            <person name="Oliver K."/>
            <person name="O'Neil S."/>
            <person name="Pearson D."/>
            <person name="Quail M.A."/>
            <person name="Rabbinowitsch E."/>
            <person name="Rutherford K.M."/>
            <person name="Rutter S."/>
            <person name="Saunders D."/>
            <person name="Seeger K."/>
            <person name="Sharp S."/>
            <person name="Skelton J."/>
            <person name="Simmonds M.N."/>
            <person name="Squares R."/>
            <person name="Squares S."/>
            <person name="Stevens K."/>
            <person name="Taylor K."/>
            <person name="Taylor R.G."/>
            <person name="Tivey A."/>
            <person name="Walsh S.V."/>
            <person name="Warren T."/>
            <person name="Whitehead S."/>
            <person name="Woodward J.R."/>
            <person name="Volckaert G."/>
            <person name="Aert R."/>
            <person name="Robben J."/>
            <person name="Grymonprez B."/>
            <person name="Weltjens I."/>
            <person name="Vanstreels E."/>
            <person name="Rieger M."/>
            <person name="Schaefer M."/>
            <person name="Mueller-Auer S."/>
            <person name="Gabel C."/>
            <person name="Fuchs M."/>
            <person name="Duesterhoeft A."/>
            <person name="Fritzc C."/>
            <person name="Holzer E."/>
            <person name="Moestl D."/>
            <person name="Hilbert H."/>
            <person name="Borzym K."/>
            <person name="Langer I."/>
            <person name="Beck A."/>
            <person name="Lehrach H."/>
            <person name="Reinhardt R."/>
            <person name="Pohl T.M."/>
            <person name="Eger P."/>
            <person name="Zimmermann W."/>
            <person name="Wedler H."/>
            <person name="Wambutt R."/>
            <person name="Purnelle B."/>
            <person name="Goffeau A."/>
            <person name="Cadieu E."/>
            <person name="Dreano S."/>
            <person name="Gloux S."/>
            <person name="Lelaure V."/>
            <person name="Mottier S."/>
            <person name="Galibert F."/>
            <person name="Aves S.J."/>
            <person name="Xiang Z."/>
            <person name="Hunt C."/>
            <person name="Moore K."/>
            <person name="Hurst S.M."/>
            <person name="Lucas M."/>
            <person name="Rochet M."/>
            <person name="Gaillardin C."/>
            <person name="Tallada V.A."/>
            <person name="Garzon A."/>
            <person name="Thode G."/>
            <person name="Daga R.R."/>
            <person name="Cruzado L."/>
            <person name="Jimenez J."/>
            <person name="Sanchez M."/>
            <person name="del Rey F."/>
            <person name="Benito J."/>
            <person name="Dominguez A."/>
            <person name="Revuelta J.L."/>
            <person name="Moreno S."/>
            <person name="Armstrong J."/>
            <person name="Forsburg S.L."/>
            <person name="Cerutti L."/>
            <person name="Lowe T."/>
            <person name="McCombie W.R."/>
            <person name="Paulsen I."/>
            <person name="Potashkin J."/>
            <person name="Shpakovski G.V."/>
            <person name="Ussery D."/>
            <person name="Barrell B.G."/>
            <person name="Nurse P."/>
        </authorList>
    </citation>
    <scope>NUCLEOTIDE SEQUENCE [LARGE SCALE GENOMIC DNA]</scope>
    <source>
        <strain>972 / ATCC 24843</strain>
    </source>
</reference>
<reference key="2">
    <citation type="journal article" date="2000" name="Genes Cells">
        <title>Large-scale screening of intracellular protein localization in living fission yeast cells by the use of a GFP-fusion genomic DNA library.</title>
        <authorList>
            <person name="Ding D.-Q."/>
            <person name="Tomita Y."/>
            <person name="Yamamoto A."/>
            <person name="Chikashige Y."/>
            <person name="Haraguchi T."/>
            <person name="Hiraoka Y."/>
        </authorList>
    </citation>
    <scope>NUCLEOTIDE SEQUENCE [LARGE SCALE GENOMIC DNA] OF 121-248</scope>
    <scope>SUBCELLULAR LOCATION</scope>
    <source>
        <strain>ATCC 38364 / 968</strain>
    </source>
</reference>
<reference key="3">
    <citation type="journal article" date="2000" name="Mol. Cell. Biol.">
        <title>Analysis of fission yeast primase defines the checkpoint responses to aberrant S phase initiation.</title>
        <authorList>
            <person name="Tan S."/>
            <person name="Wang T.S."/>
        </authorList>
    </citation>
    <scope>INTERACTION WITH SPP1 AND POL1</scope>
</reference>
<reference key="4">
    <citation type="journal article" date="2001" name="Mol. Biol. Cell">
        <title>Role of fission yeast primase catalytic subunit in the replication checkpoint.</title>
        <authorList>
            <person name="Griffiths D.J."/>
            <person name="Liu V.F."/>
            <person name="Nurse P."/>
            <person name="Wang T.S."/>
        </authorList>
    </citation>
    <scope>INTERACTION WITH SPP1 AND POL1</scope>
</reference>
<reference key="5">
    <citation type="journal article" date="2004" name="Mol. Cell. Biol.">
        <title>The B-subunit of DNA polymerase alpha-primase associates with the origin recognition complex for initiation of DNA replication.</title>
        <authorList>
            <person name="Uchiyama M."/>
            <person name="Wang T.S."/>
        </authorList>
    </citation>
    <scope>IDENTIFICATION IN THE DNA POLYMERASE ALPHA COMPLEX</scope>
    <scope>INTERACTION WITH ORC2</scope>
    <scope>SUBCELLULAR LOCATION</scope>
</reference>
<dbReference type="EMBL" id="CU329671">
    <property type="protein sequence ID" value="CAA21077.1"/>
    <property type="molecule type" value="Genomic_DNA"/>
</dbReference>
<dbReference type="EMBL" id="AB027983">
    <property type="protein sequence ID" value="BAA87287.1"/>
    <property type="molecule type" value="Genomic_DNA"/>
</dbReference>
<dbReference type="PIR" id="T39717">
    <property type="entry name" value="T39717"/>
</dbReference>
<dbReference type="RefSeq" id="NP_596380.1">
    <property type="nucleotide sequence ID" value="NM_001022301.2"/>
</dbReference>
<dbReference type="SMR" id="O74761"/>
<dbReference type="BioGRID" id="276477">
    <property type="interactions" value="13"/>
</dbReference>
<dbReference type="ComplexPortal" id="CPX-2092">
    <property type="entry name" value="DNA polymerase alpha:primase complex"/>
</dbReference>
<dbReference type="FunCoup" id="O74761">
    <property type="interactions" value="458"/>
</dbReference>
<dbReference type="IntAct" id="O74761">
    <property type="interactions" value="2"/>
</dbReference>
<dbReference type="STRING" id="284812.O74761"/>
<dbReference type="iPTMnet" id="O74761"/>
<dbReference type="SwissPalm" id="O74761"/>
<dbReference type="PaxDb" id="4896-SPBC17D11.06.1"/>
<dbReference type="EnsemblFungi" id="SPBC17D11.06.1">
    <property type="protein sequence ID" value="SPBC17D11.06.1:pep"/>
    <property type="gene ID" value="SPBC17D11.06"/>
</dbReference>
<dbReference type="GeneID" id="2539933"/>
<dbReference type="KEGG" id="spo:2539933"/>
<dbReference type="PomBase" id="SPBC17D11.06">
    <property type="gene designation" value="spp2"/>
</dbReference>
<dbReference type="VEuPathDB" id="FungiDB:SPBC17D11.06"/>
<dbReference type="eggNOG" id="KOG2267">
    <property type="taxonomic scope" value="Eukaryota"/>
</dbReference>
<dbReference type="HOGENOM" id="CLU_026253_1_0_1"/>
<dbReference type="InParanoid" id="O74761"/>
<dbReference type="OMA" id="RINYKPW"/>
<dbReference type="PhylomeDB" id="O74761"/>
<dbReference type="Reactome" id="R-SPO-113501">
    <property type="pathway name" value="Inhibition of replication initiation of damaged DNA by RB1/E2F1"/>
</dbReference>
<dbReference type="Reactome" id="R-SPO-68952">
    <property type="pathway name" value="DNA replication initiation"/>
</dbReference>
<dbReference type="Reactome" id="R-SPO-68962">
    <property type="pathway name" value="Activation of the pre-replicative complex"/>
</dbReference>
<dbReference type="Reactome" id="R-SPO-69091">
    <property type="pathway name" value="Polymerase switching"/>
</dbReference>
<dbReference type="Reactome" id="R-SPO-69166">
    <property type="pathway name" value="Removal of the Flap Intermediate"/>
</dbReference>
<dbReference type="Reactome" id="R-SPO-69183">
    <property type="pathway name" value="Processive synthesis on the lagging strand"/>
</dbReference>
<dbReference type="PRO" id="PR:O74761"/>
<dbReference type="Proteomes" id="UP000002485">
    <property type="component" value="Chromosome II"/>
</dbReference>
<dbReference type="GO" id="GO:0005658">
    <property type="term" value="C:alpha DNA polymerase:primase complex"/>
    <property type="evidence" value="ECO:0000353"/>
    <property type="project" value="ComplexPortal"/>
</dbReference>
<dbReference type="GO" id="GO:0005737">
    <property type="term" value="C:cytoplasm"/>
    <property type="evidence" value="ECO:0007005"/>
    <property type="project" value="PomBase"/>
</dbReference>
<dbReference type="GO" id="GO:0005829">
    <property type="term" value="C:cytosol"/>
    <property type="evidence" value="ECO:0007005"/>
    <property type="project" value="PomBase"/>
</dbReference>
<dbReference type="GO" id="GO:0005634">
    <property type="term" value="C:nucleus"/>
    <property type="evidence" value="ECO:0007005"/>
    <property type="project" value="PomBase"/>
</dbReference>
<dbReference type="GO" id="GO:0051539">
    <property type="term" value="F:4 iron, 4 sulfur cluster binding"/>
    <property type="evidence" value="ECO:0007669"/>
    <property type="project" value="UniProtKB-KW"/>
</dbReference>
<dbReference type="GO" id="GO:0003677">
    <property type="term" value="F:DNA binding"/>
    <property type="evidence" value="ECO:0007669"/>
    <property type="project" value="UniProtKB-KW"/>
</dbReference>
<dbReference type="GO" id="GO:0046872">
    <property type="term" value="F:metal ion binding"/>
    <property type="evidence" value="ECO:0007669"/>
    <property type="project" value="UniProtKB-KW"/>
</dbReference>
<dbReference type="GO" id="GO:0006270">
    <property type="term" value="P:DNA replication initiation"/>
    <property type="evidence" value="ECO:0000314"/>
    <property type="project" value="ComplexPortal"/>
</dbReference>
<dbReference type="GO" id="GO:0006269">
    <property type="term" value="P:DNA replication, synthesis of primer"/>
    <property type="evidence" value="ECO:0000318"/>
    <property type="project" value="GO_Central"/>
</dbReference>
<dbReference type="CDD" id="cd07322">
    <property type="entry name" value="PriL_PriS_Eukaryotic"/>
    <property type="match status" value="1"/>
</dbReference>
<dbReference type="FunFam" id="1.20.930.80:FF:000003">
    <property type="entry name" value="DNA primase large subunit"/>
    <property type="match status" value="1"/>
</dbReference>
<dbReference type="Gene3D" id="1.20.930.80">
    <property type="match status" value="1"/>
</dbReference>
<dbReference type="InterPro" id="IPR016558">
    <property type="entry name" value="DNA_primase_lsu_euk"/>
</dbReference>
<dbReference type="InterPro" id="IPR007238">
    <property type="entry name" value="DNA_primase_lsu_euk/arc"/>
</dbReference>
<dbReference type="PANTHER" id="PTHR10537">
    <property type="entry name" value="DNA PRIMASE LARGE SUBUNIT"/>
    <property type="match status" value="1"/>
</dbReference>
<dbReference type="PANTHER" id="PTHR10537:SF3">
    <property type="entry name" value="DNA PRIMASE LARGE SUBUNIT"/>
    <property type="match status" value="1"/>
</dbReference>
<dbReference type="Pfam" id="PF04104">
    <property type="entry name" value="DNA_primase_lrg"/>
    <property type="match status" value="1"/>
</dbReference>
<dbReference type="PIRSF" id="PIRSF009449">
    <property type="entry name" value="DNA_primase_large_subunit"/>
    <property type="match status" value="1"/>
</dbReference>
<dbReference type="SUPFAM" id="SSF140914">
    <property type="entry name" value="PriB N-terminal domain-like"/>
    <property type="match status" value="1"/>
</dbReference>
<name>PRI2_SCHPO</name>
<proteinExistence type="evidence at protein level"/>
<feature type="chain" id="PRO_0000046775" description="DNA primase large subunit">
    <location>
        <begin position="1"/>
        <end position="459"/>
    </location>
</feature>
<feature type="binding site" evidence="1">
    <location>
        <position position="291"/>
    </location>
    <ligand>
        <name>[4Fe-4S] cluster</name>
        <dbReference type="ChEBI" id="CHEBI:49883"/>
    </ligand>
</feature>
<feature type="binding site" evidence="1">
    <location>
        <position position="369"/>
    </location>
    <ligand>
        <name>[4Fe-4S] cluster</name>
        <dbReference type="ChEBI" id="CHEBI:49883"/>
    </ligand>
</feature>
<feature type="binding site" evidence="1">
    <location>
        <position position="386"/>
    </location>
    <ligand>
        <name>[4Fe-4S] cluster</name>
        <dbReference type="ChEBI" id="CHEBI:49883"/>
    </ligand>
</feature>
<feature type="binding site" evidence="1">
    <location>
        <position position="428"/>
    </location>
    <ligand>
        <name>[4Fe-4S] cluster</name>
        <dbReference type="ChEBI" id="CHEBI:49883"/>
    </ligand>
</feature>